<sequence>MPGLAMDGPSAMASRATVADMHYDPASASQQANGGIYRNGIGKKSHSPVDGLHDSHIGCLHELPPELSHITLGFFPFNNLISRVVQQSWNDLNELLNEMGSSQAYQTGISSQLSATKNGMSEKFRGDQATENSLKKLRILEFTHSRRAEFIKLLVLSQWSRQANEVSRLIDIQAFIRMRSGFYEAALFHIGNMKQNLIVAQLANPDLKTASHVLSAGKIDALHGLEFLSPRPLAPSQVLRLLRGINKLIDMRLALHDHVPDSLQNYFVHDGRVTFIVPNEFEIDLSVASAAPSAQFFLVDMKFLFFPSSLPKGRLRSIVDHQVNSTLMNAGLVGCFNLLHNLILTHKITILFKQAIDLARTYWSEHLRVELFHRTLVLQYWSKKPGGKSWIEIGVHSGLKGSPQSTGTTTSFLQLRWFRDNEEVSATDIDFNLTFLSAKSILFSAISLHITHILRTAFEALRQNRLYCLGGLYIGMSASSKEPGDCYLELQMTQTSHLDIMVEAVSGDTVLRVAPSPITRYDTEIIVDRGSVEDIVERVSRLRCVSALEEVERYAKAVGWMPLNLRHVNLESLKRIFPPSALRSMLLFRAKCWEPSWLAVFTSAMDGDNWWIVQLQTQNPPALQSHWRLLEAQRAKLITGWFTGWLGRLHNASFSSLLSALSGMIMVQCNVDFLNEIGAIHFFPPPKDLLLQPCLRVPSIYLRLRHDDFPSQFRTIFSGGSPRRSFIDETFRISYKGIDQQSGHAITMVYGRLMTDIDMFGALYAKSVQDIAFQPKGRGFAILFRTPVGTPIIAPLLERLQQMNNIAFVVESMKSQGFQPHSLSPLRIKFSYPTQGELRGSIKFIYHDQGSHFESKLLFPATTTKPILHPRIGIDFNYQNPHRRITESLSTILNSHKDGMSLVLELINITLPLLVTLERICAEEYIDNAWCFRAQYTARSARLYQIRYPFLRYRFNVSASQRKSYVVWVIQNSTPGPERSKHPSLELRLKDQIYNSQGDGWRGINQGAMAYSANVSRLVFDLHQLMKSYISQMAKSNQRGEPTDSSPSAGCEFGRYLPKNENKKGHIQTTTAPTLEHAYGNSNMVVQSVRQGEAAARDVDVIAID</sequence>
<feature type="chain" id="PRO_0000304600" description="Mediator of RNA polymerase II transcription subunit 14">
    <location>
        <begin position="1"/>
        <end position="1105"/>
    </location>
</feature>
<feature type="region of interest" description="Disordered" evidence="2">
    <location>
        <begin position="28"/>
        <end position="48"/>
    </location>
</feature>
<name>MED14_COCIM</name>
<keyword id="KW-0010">Activator</keyword>
<keyword id="KW-0539">Nucleus</keyword>
<keyword id="KW-1185">Reference proteome</keyword>
<keyword id="KW-0804">Transcription</keyword>
<keyword id="KW-0805">Transcription regulation</keyword>
<reference key="1">
    <citation type="journal article" date="2009" name="Genome Res.">
        <title>Comparative genomic analyses of the human fungal pathogens Coccidioides and their relatives.</title>
        <authorList>
            <person name="Sharpton T.J."/>
            <person name="Stajich J.E."/>
            <person name="Rounsley S.D."/>
            <person name="Gardner M.J."/>
            <person name="Wortman J.R."/>
            <person name="Jordar V.S."/>
            <person name="Maiti R."/>
            <person name="Kodira C.D."/>
            <person name="Neafsey D.E."/>
            <person name="Zeng Q."/>
            <person name="Hung C.-Y."/>
            <person name="McMahan C."/>
            <person name="Muszewska A."/>
            <person name="Grynberg M."/>
            <person name="Mandel M.A."/>
            <person name="Kellner E.M."/>
            <person name="Barker B.M."/>
            <person name="Galgiani J.N."/>
            <person name="Orbach M.J."/>
            <person name="Kirkland T.N."/>
            <person name="Cole G.T."/>
            <person name="Henn M.R."/>
            <person name="Birren B.W."/>
            <person name="Taylor J.W."/>
        </authorList>
    </citation>
    <scope>NUCLEOTIDE SEQUENCE [LARGE SCALE GENOMIC DNA]</scope>
    <source>
        <strain>RS</strain>
    </source>
</reference>
<reference key="2">
    <citation type="journal article" date="2010" name="Genome Res.">
        <title>Population genomic sequencing of Coccidioides fungi reveals recent hybridization and transposon control.</title>
        <authorList>
            <person name="Neafsey D.E."/>
            <person name="Barker B.M."/>
            <person name="Sharpton T.J."/>
            <person name="Stajich J.E."/>
            <person name="Park D.J."/>
            <person name="Whiston E."/>
            <person name="Hung C.-Y."/>
            <person name="McMahan C."/>
            <person name="White J."/>
            <person name="Sykes S."/>
            <person name="Heiman D."/>
            <person name="Young S."/>
            <person name="Zeng Q."/>
            <person name="Abouelleil A."/>
            <person name="Aftuck L."/>
            <person name="Bessette D."/>
            <person name="Brown A."/>
            <person name="FitzGerald M."/>
            <person name="Lui A."/>
            <person name="Macdonald J.P."/>
            <person name="Priest M."/>
            <person name="Orbach M.J."/>
            <person name="Galgiani J.N."/>
            <person name="Kirkland T.N."/>
            <person name="Cole G.T."/>
            <person name="Birren B.W."/>
            <person name="Henn M.R."/>
            <person name="Taylor J.W."/>
            <person name="Rounsley S.D."/>
        </authorList>
    </citation>
    <scope>GENOME REANNOTATION</scope>
    <source>
        <strain>RS</strain>
    </source>
</reference>
<accession>Q1DZL3</accession>
<accession>J3KDK0</accession>
<organism>
    <name type="scientific">Coccidioides immitis (strain RS)</name>
    <name type="common">Valley fever fungus</name>
    <dbReference type="NCBI Taxonomy" id="246410"/>
    <lineage>
        <taxon>Eukaryota</taxon>
        <taxon>Fungi</taxon>
        <taxon>Dikarya</taxon>
        <taxon>Ascomycota</taxon>
        <taxon>Pezizomycotina</taxon>
        <taxon>Eurotiomycetes</taxon>
        <taxon>Eurotiomycetidae</taxon>
        <taxon>Onygenales</taxon>
        <taxon>Onygenaceae</taxon>
        <taxon>Coccidioides</taxon>
    </lineage>
</organism>
<protein>
    <recommendedName>
        <fullName>Mediator of RNA polymerase II transcription subunit 14</fullName>
    </recommendedName>
    <alternativeName>
        <fullName>Mediator complex subunit 14</fullName>
    </alternativeName>
</protein>
<comment type="function">
    <text evidence="1">Component of the Mediator complex, a coactivator involved in the regulated transcription of nearly all RNA polymerase II-dependent genes. Mediator functions as a bridge to convey information from gene-specific regulatory proteins to the basal RNA polymerase II transcription machinery. Mediator is recruited to promoters by direct interactions with regulatory proteins and serves as a scaffold for the assembly of a functional preinitiation complex with RNA polymerase II and the general transcription factors (By similarity).</text>
</comment>
<comment type="subunit">
    <text evidence="1">Component of the Mediator complex.</text>
</comment>
<comment type="subcellular location">
    <subcellularLocation>
        <location evidence="3">Nucleus</location>
    </subcellularLocation>
</comment>
<comment type="similarity">
    <text evidence="3">Belongs to the Mediator complex subunit 14 family.</text>
</comment>
<proteinExistence type="inferred from homology"/>
<evidence type="ECO:0000250" key="1"/>
<evidence type="ECO:0000256" key="2">
    <source>
        <dbReference type="SAM" id="MobiDB-lite"/>
    </source>
</evidence>
<evidence type="ECO:0000305" key="3"/>
<gene>
    <name type="primary">RGR1</name>
    <name type="synonym">MED14</name>
    <name type="ORF">CIMG_04250</name>
</gene>
<dbReference type="EMBL" id="GG704916">
    <property type="protein sequence ID" value="EAS33226.3"/>
    <property type="molecule type" value="Genomic_DNA"/>
</dbReference>
<dbReference type="RefSeq" id="XP_001244809.2">
    <property type="nucleotide sequence ID" value="XM_001244808.2"/>
</dbReference>
<dbReference type="STRING" id="246410.Q1DZL3"/>
<dbReference type="GeneID" id="4562608"/>
<dbReference type="KEGG" id="cim:CIMG_04250"/>
<dbReference type="VEuPathDB" id="FungiDB:CIMG_04250"/>
<dbReference type="InParanoid" id="Q1DZL3"/>
<dbReference type="OMA" id="ITQGYIP"/>
<dbReference type="OrthoDB" id="205099at2759"/>
<dbReference type="Proteomes" id="UP000001261">
    <property type="component" value="Unassembled WGS sequence"/>
</dbReference>
<dbReference type="GO" id="GO:0070847">
    <property type="term" value="C:core mediator complex"/>
    <property type="evidence" value="ECO:0007669"/>
    <property type="project" value="TreeGrafter"/>
</dbReference>
<dbReference type="GO" id="GO:0016592">
    <property type="term" value="C:mediator complex"/>
    <property type="evidence" value="ECO:0007669"/>
    <property type="project" value="InterPro"/>
</dbReference>
<dbReference type="GO" id="GO:0003712">
    <property type="term" value="F:transcription coregulator activity"/>
    <property type="evidence" value="ECO:0007669"/>
    <property type="project" value="InterPro"/>
</dbReference>
<dbReference type="GO" id="GO:0006357">
    <property type="term" value="P:regulation of transcription by RNA polymerase II"/>
    <property type="evidence" value="ECO:0007669"/>
    <property type="project" value="InterPro"/>
</dbReference>
<dbReference type="InterPro" id="IPR055122">
    <property type="entry name" value="Med14_N"/>
</dbReference>
<dbReference type="InterPro" id="IPR013947">
    <property type="entry name" value="Mediator_Med14"/>
</dbReference>
<dbReference type="PANTHER" id="PTHR12809">
    <property type="entry name" value="MEDIATOR COMPLEX SUBUNIT"/>
    <property type="match status" value="1"/>
</dbReference>
<dbReference type="PANTHER" id="PTHR12809:SF2">
    <property type="entry name" value="MEDIATOR OF RNA POLYMERASE II TRANSCRIPTION SUBUNIT 14"/>
    <property type="match status" value="1"/>
</dbReference>
<dbReference type="Pfam" id="PF08638">
    <property type="entry name" value="Med14"/>
    <property type="match status" value="1"/>
</dbReference>